<sequence length="267" mass="30454">MKKHTDQPIADVQGSPDTRHIAIDRVGIKAIRHPVLVADKDGGSQHTVAQFNMYVNLPHNFKGTHMSRFVEILNSHEREISVESFEEILRSMVSRLESDSGHIEMTFPYFVNKSAPISGVKSLLDYEVTFIGEIKHGDQYGFTMKVIVPVTSLCPCSKKISDYGAHNQRSHVTISVHTNSFVWIEDVIRIAEEQASCELFGLLKRPDEKYVTEKAYNNPKFVEDIVRDVAEILNHDDRIDAYVVESENFESIHNHSAYALIERDKRK</sequence>
<dbReference type="EC" id="3.5.4.16" evidence="1"/>
<dbReference type="EMBL" id="CP000450">
    <property type="protein sequence ID" value="ABI59747.1"/>
    <property type="molecule type" value="Genomic_DNA"/>
</dbReference>
<dbReference type="RefSeq" id="WP_011634553.1">
    <property type="nucleotide sequence ID" value="NC_008344.1"/>
</dbReference>
<dbReference type="SMR" id="Q0AFY5"/>
<dbReference type="STRING" id="335283.Neut_1502"/>
<dbReference type="KEGG" id="net:Neut_1502"/>
<dbReference type="eggNOG" id="COG1469">
    <property type="taxonomic scope" value="Bacteria"/>
</dbReference>
<dbReference type="HOGENOM" id="CLU_062816_1_1_4"/>
<dbReference type="OrthoDB" id="9774824at2"/>
<dbReference type="UniPathway" id="UPA00848">
    <property type="reaction ID" value="UER00151"/>
</dbReference>
<dbReference type="Proteomes" id="UP000001966">
    <property type="component" value="Chromosome"/>
</dbReference>
<dbReference type="GO" id="GO:0003934">
    <property type="term" value="F:GTP cyclohydrolase I activity"/>
    <property type="evidence" value="ECO:0007669"/>
    <property type="project" value="UniProtKB-UniRule"/>
</dbReference>
<dbReference type="GO" id="GO:0046654">
    <property type="term" value="P:tetrahydrofolate biosynthetic process"/>
    <property type="evidence" value="ECO:0007669"/>
    <property type="project" value="UniProtKB-UniRule"/>
</dbReference>
<dbReference type="Gene3D" id="3.10.270.10">
    <property type="entry name" value="Urate Oxidase"/>
    <property type="match status" value="1"/>
</dbReference>
<dbReference type="HAMAP" id="MF_01527_B">
    <property type="entry name" value="GTP_cyclohydrol_B"/>
    <property type="match status" value="1"/>
</dbReference>
<dbReference type="InterPro" id="IPR022838">
    <property type="entry name" value="GTP_cyclohydrolase_FolE2"/>
</dbReference>
<dbReference type="InterPro" id="IPR003801">
    <property type="entry name" value="GTP_cyclohydrolase_FolE2/MptA"/>
</dbReference>
<dbReference type="NCBIfam" id="NF010200">
    <property type="entry name" value="PRK13674.1-1"/>
    <property type="match status" value="1"/>
</dbReference>
<dbReference type="PANTHER" id="PTHR36445">
    <property type="entry name" value="GTP CYCLOHYDROLASE MPTA"/>
    <property type="match status" value="1"/>
</dbReference>
<dbReference type="PANTHER" id="PTHR36445:SF1">
    <property type="entry name" value="GTP CYCLOHYDROLASE MPTA"/>
    <property type="match status" value="1"/>
</dbReference>
<dbReference type="Pfam" id="PF02649">
    <property type="entry name" value="GCHY-1"/>
    <property type="match status" value="1"/>
</dbReference>
<feature type="chain" id="PRO_0000289501" description="GTP cyclohydrolase FolE2">
    <location>
        <begin position="1"/>
        <end position="267"/>
    </location>
</feature>
<feature type="site" description="May be catalytically important" evidence="1">
    <location>
        <position position="154"/>
    </location>
</feature>
<keyword id="KW-0378">Hydrolase</keyword>
<accession>Q0AFY5</accession>
<proteinExistence type="inferred from homology"/>
<protein>
    <recommendedName>
        <fullName evidence="1">GTP cyclohydrolase FolE2</fullName>
        <ecNumber evidence="1">3.5.4.16</ecNumber>
    </recommendedName>
</protein>
<organism>
    <name type="scientific">Nitrosomonas eutropha (strain DSM 101675 / C91 / Nm57)</name>
    <dbReference type="NCBI Taxonomy" id="335283"/>
    <lineage>
        <taxon>Bacteria</taxon>
        <taxon>Pseudomonadati</taxon>
        <taxon>Pseudomonadota</taxon>
        <taxon>Betaproteobacteria</taxon>
        <taxon>Nitrosomonadales</taxon>
        <taxon>Nitrosomonadaceae</taxon>
        <taxon>Nitrosomonas</taxon>
    </lineage>
</organism>
<evidence type="ECO:0000255" key="1">
    <source>
        <dbReference type="HAMAP-Rule" id="MF_01527"/>
    </source>
</evidence>
<gene>
    <name evidence="1" type="primary">folE2</name>
    <name type="ordered locus">Neut_1502</name>
</gene>
<reference key="1">
    <citation type="journal article" date="2007" name="Environ. Microbiol.">
        <title>Whole-genome analysis of the ammonia-oxidizing bacterium, Nitrosomonas eutropha C91: implications for niche adaptation.</title>
        <authorList>
            <person name="Stein L.Y."/>
            <person name="Arp D.J."/>
            <person name="Berube P.M."/>
            <person name="Chain P.S."/>
            <person name="Hauser L."/>
            <person name="Jetten M.S."/>
            <person name="Klotz M.G."/>
            <person name="Larimer F.W."/>
            <person name="Norton J.M."/>
            <person name="Op den Camp H.J.M."/>
            <person name="Shin M."/>
            <person name="Wei X."/>
        </authorList>
    </citation>
    <scope>NUCLEOTIDE SEQUENCE [LARGE SCALE GENOMIC DNA]</scope>
    <source>
        <strain>DSM 101675 / C91 / Nm57</strain>
    </source>
</reference>
<comment type="function">
    <text evidence="1">Converts GTP to 7,8-dihydroneopterin triphosphate.</text>
</comment>
<comment type="catalytic activity">
    <reaction evidence="1">
        <text>GTP + H2O = 7,8-dihydroneopterin 3'-triphosphate + formate + H(+)</text>
        <dbReference type="Rhea" id="RHEA:17473"/>
        <dbReference type="ChEBI" id="CHEBI:15377"/>
        <dbReference type="ChEBI" id="CHEBI:15378"/>
        <dbReference type="ChEBI" id="CHEBI:15740"/>
        <dbReference type="ChEBI" id="CHEBI:37565"/>
        <dbReference type="ChEBI" id="CHEBI:58462"/>
        <dbReference type="EC" id="3.5.4.16"/>
    </reaction>
</comment>
<comment type="pathway">
    <text evidence="1">Cofactor biosynthesis; 7,8-dihydroneopterin triphosphate biosynthesis; 7,8-dihydroneopterin triphosphate from GTP: step 1/1.</text>
</comment>
<comment type="similarity">
    <text evidence="1">Belongs to the GTP cyclohydrolase IV family.</text>
</comment>
<name>GCH4_NITEC</name>